<gene>
    <name type="primary">lgrE</name>
    <name type="synonym">lgrT</name>
</gene>
<evidence type="ECO:0000250" key="1"/>
<evidence type="ECO:0000305" key="2"/>
<protein>
    <recommendedName>
        <fullName>Linear gramicidin dehydrogenase LgrE</fullName>
        <ecNumber>1.1.-.-</ecNumber>
    </recommendedName>
</protein>
<proteinExistence type="evidence at protein level"/>
<organism>
    <name type="scientific">Brevibacillus parabrevis</name>
    <dbReference type="NCBI Taxonomy" id="54914"/>
    <lineage>
        <taxon>Bacteria</taxon>
        <taxon>Bacillati</taxon>
        <taxon>Bacillota</taxon>
        <taxon>Bacilli</taxon>
        <taxon>Bacillales</taxon>
        <taxon>Paenibacillaceae</taxon>
        <taxon>Brevibacillus</taxon>
    </lineage>
</organism>
<sequence>MQKTHVSPSRWLLSPKMTAEAEVLLFSFHYAGGHAGIYREWQKKLPVQIGVCPVQLPGRSNRFMEPYYTDLSVMIRELAEALLPHLNRPFAFFGHSMGALVSFELARYLRNQYGIKPRHMFASGRHAPHLPDPGEAIHHLPDAEFLKGLRTLNGTPKELFENEENEEILQMLLPMLRADFTICEQYQYQEEEPLGCGLTAIGGWQDPDITVAHMEAWRKHTSASFQMHMLQGDHFFLHSEQEQLLAIIESTLQSYLVGYRGIG</sequence>
<comment type="function">
    <text>In the final step of gramicidin biosynthesis, reduces the pentadecapeptide-aldehyde intermediate, that is released from the terminal module of the non-ribosomal peptide synthetase LgrD, to the final product ethanolamine-containing gramicidin.</text>
</comment>
<comment type="miscellaneous">
    <text>The reduction is strictly NADPH-dependent.</text>
</comment>
<comment type="miscellaneous">
    <text>Linear gramicidine is a pentadecapeptide antibiotic produced during sporulation.</text>
</comment>
<comment type="similarity">
    <text evidence="2">Belongs to the thioesterase family.</text>
</comment>
<comment type="caution">
    <text evidence="2">Although this protein is said to have a reductase activity, it clearly belongs to the thioesterase (hydrolase) family.</text>
</comment>
<accession>Q70LM8</accession>
<name>LGRE_BREPA</name>
<dbReference type="EC" id="1.1.-.-"/>
<dbReference type="EMBL" id="AJ566197">
    <property type="protein sequence ID" value="CAD92848.1"/>
    <property type="molecule type" value="Genomic_DNA"/>
</dbReference>
<dbReference type="SMR" id="Q70LM8"/>
<dbReference type="STRING" id="54914.AV540_01985"/>
<dbReference type="ESTHER" id="bacbr-q70lm8">
    <property type="family name" value="Thioesterase"/>
</dbReference>
<dbReference type="GO" id="GO:0016491">
    <property type="term" value="F:oxidoreductase activity"/>
    <property type="evidence" value="ECO:0007669"/>
    <property type="project" value="UniProtKB-KW"/>
</dbReference>
<dbReference type="GO" id="GO:0017000">
    <property type="term" value="P:antibiotic biosynthetic process"/>
    <property type="evidence" value="ECO:0007669"/>
    <property type="project" value="UniProtKB-KW"/>
</dbReference>
<dbReference type="GO" id="GO:0008610">
    <property type="term" value="P:lipid biosynthetic process"/>
    <property type="evidence" value="ECO:0007669"/>
    <property type="project" value="TreeGrafter"/>
</dbReference>
<dbReference type="Gene3D" id="3.40.50.1820">
    <property type="entry name" value="alpha/beta hydrolase"/>
    <property type="match status" value="1"/>
</dbReference>
<dbReference type="InterPro" id="IPR029058">
    <property type="entry name" value="AB_hydrolase_fold"/>
</dbReference>
<dbReference type="InterPro" id="IPR012223">
    <property type="entry name" value="TEII"/>
</dbReference>
<dbReference type="InterPro" id="IPR001031">
    <property type="entry name" value="Thioesterase"/>
</dbReference>
<dbReference type="PANTHER" id="PTHR11487:SF0">
    <property type="entry name" value="S-ACYL FATTY ACID SYNTHASE THIOESTERASE, MEDIUM CHAIN"/>
    <property type="match status" value="1"/>
</dbReference>
<dbReference type="PANTHER" id="PTHR11487">
    <property type="entry name" value="THIOESTERASE"/>
    <property type="match status" value="1"/>
</dbReference>
<dbReference type="Pfam" id="PF00975">
    <property type="entry name" value="Thioesterase"/>
    <property type="match status" value="1"/>
</dbReference>
<dbReference type="SUPFAM" id="SSF53474">
    <property type="entry name" value="alpha/beta-Hydrolases"/>
    <property type="match status" value="1"/>
</dbReference>
<reference key="1">
    <citation type="journal article" date="2004" name="J. Biol. Chem.">
        <title>The linear pentadecapeptide gramicidin is assembled by four multimodular nonribosomal peptide synthetases that comprise 16 modules with 57 catalytic domains.</title>
        <authorList>
            <person name="Kessler N."/>
            <person name="Schuhmann H."/>
            <person name="Morneweg S."/>
            <person name="Linne U."/>
            <person name="Marahiel M.A."/>
        </authorList>
    </citation>
    <scope>NUCLEOTIDE SEQUENCE [GENOMIC DNA]</scope>
    <source>
        <strain>ATCC 8185 / DSM 362 / JCM 20017 / IAM 1031 / NBRC 3331 / NCDO 717 / NCIMB 8598 / NRS 751 / BG</strain>
    </source>
</reference>
<reference key="2">
    <citation type="journal article" date="2005" name="Biochemistry">
        <title>Synthesis of linear gramicidin requires the cooperation of two independent reductases.</title>
        <authorList>
            <person name="Schracke N."/>
            <person name="Linne U."/>
            <person name="Mahlert C."/>
            <person name="Marahiel M.A."/>
        </authorList>
    </citation>
    <scope>CHARACTERIZATION</scope>
    <source>
        <strain>ATCC 8185 / DSM 362 / JCM 20017 / IAM 1031 / NBRC 3331 / NCDO 717 / NCIMB 8598 / NRS 751 / BG</strain>
    </source>
</reference>
<keyword id="KW-0045">Antibiotic biosynthesis</keyword>
<keyword id="KW-0521">NADP</keyword>
<keyword id="KW-0560">Oxidoreductase</keyword>
<feature type="chain" id="PRO_0000180363" description="Linear gramicidin dehydrogenase LgrE">
    <location>
        <begin position="1"/>
        <end position="263"/>
    </location>
</feature>
<feature type="active site" evidence="1">
    <location>
        <position position="96"/>
    </location>
</feature>